<comment type="function">
    <text>May be involved in transcriptional regulation.</text>
</comment>
<comment type="subcellular location">
    <subcellularLocation>
        <location evidence="4">Nucleus</location>
    </subcellularLocation>
</comment>
<protein>
    <recommendedName>
        <fullName>Zinc finger and BTB domain-containing protein 8B</fullName>
    </recommendedName>
</protein>
<name>ZBT8B_MOUSE</name>
<sequence>MEAQSYCAKLLGELNEQRKRDFFCDCSIIVEGRIFKAHRNILFANSGYFRALLLHYIQDSGRHSTASLDIVTSDAFSTILDFLYSGKLDLCGENVIEVMSAASYLQMNEVVNFCKTYIRSSLDICRKMEKEAAVAAAMAAAAAAAAAAAHQIDSESPSSGLEGTSCGTKSFVSSPVDGEGSLDCTISSCDDCHPLELVAKDSQGSGVSDNDLCVVPRRVEPKVEFDVARVEVEADEQLQQYAAPLAHMEEGLPSNQALDLTYSSYHVKQFLEALLRNGAVQSKDDLDCHSSRGLEGRLEGPGVAMSSVMDVQNDWYREDAGDVLVVPIKLHRCPFCPYTAKQKGILKRHIRSHTGERPYPCETCGKRFTRQEHLRSHALSVHRSSRPIICKGCRRTFTSHLSQGLRRFGLCDSCTCVTDPQEEEDDLMPVNLSLVEASSESHEKSDTDDWPIYIESGEENDPTAEDSDDKPHIRPNLPAPETLT</sequence>
<organism>
    <name type="scientific">Mus musculus</name>
    <name type="common">Mouse</name>
    <dbReference type="NCBI Taxonomy" id="10090"/>
    <lineage>
        <taxon>Eukaryota</taxon>
        <taxon>Metazoa</taxon>
        <taxon>Chordata</taxon>
        <taxon>Craniata</taxon>
        <taxon>Vertebrata</taxon>
        <taxon>Euteleostomi</taxon>
        <taxon>Mammalia</taxon>
        <taxon>Eutheria</taxon>
        <taxon>Euarchontoglires</taxon>
        <taxon>Glires</taxon>
        <taxon>Rodentia</taxon>
        <taxon>Myomorpha</taxon>
        <taxon>Muroidea</taxon>
        <taxon>Muridae</taxon>
        <taxon>Murinae</taxon>
        <taxon>Mus</taxon>
        <taxon>Mus</taxon>
    </lineage>
</organism>
<evidence type="ECO:0000255" key="1">
    <source>
        <dbReference type="PROSITE-ProRule" id="PRU00037"/>
    </source>
</evidence>
<evidence type="ECO:0000255" key="2">
    <source>
        <dbReference type="PROSITE-ProRule" id="PRU00042"/>
    </source>
</evidence>
<evidence type="ECO:0000256" key="3">
    <source>
        <dbReference type="SAM" id="MobiDB-lite"/>
    </source>
</evidence>
<evidence type="ECO:0000305" key="4"/>
<gene>
    <name type="primary">Zbtb8b</name>
</gene>
<feature type="chain" id="PRO_0000047722" description="Zinc finger and BTB domain-containing protein 8B">
    <location>
        <begin position="1"/>
        <end position="484"/>
    </location>
</feature>
<feature type="domain" description="BTB" evidence="1">
    <location>
        <begin position="24"/>
        <end position="92"/>
    </location>
</feature>
<feature type="zinc finger region" description="C2H2-type 1" evidence="2">
    <location>
        <begin position="331"/>
        <end position="353"/>
    </location>
</feature>
<feature type="zinc finger region" description="C2H2-type 2" evidence="2">
    <location>
        <begin position="359"/>
        <end position="382"/>
    </location>
</feature>
<feature type="region of interest" description="Disordered" evidence="3">
    <location>
        <begin position="436"/>
        <end position="484"/>
    </location>
</feature>
<feature type="compositionally biased region" description="Acidic residues" evidence="3">
    <location>
        <begin position="456"/>
        <end position="468"/>
    </location>
</feature>
<feature type="sequence conflict" description="In Ref. 1; BAE37541/BAE24519/BAE20999." evidence="4" ref="1">
    <original>S</original>
    <variation>N</variation>
    <location>
        <position position="263"/>
    </location>
</feature>
<proteinExistence type="evidence at transcript level"/>
<dbReference type="EMBL" id="AK132152">
    <property type="protein sequence ID" value="BAE20999.1"/>
    <property type="molecule type" value="mRNA"/>
</dbReference>
<dbReference type="EMBL" id="AK140914">
    <property type="protein sequence ID" value="BAE24519.1"/>
    <property type="molecule type" value="mRNA"/>
</dbReference>
<dbReference type="EMBL" id="AK163930">
    <property type="protein sequence ID" value="BAE37541.1"/>
    <property type="molecule type" value="mRNA"/>
</dbReference>
<dbReference type="EMBL" id="BC023839">
    <property type="protein sequence ID" value="AAH23839.1"/>
    <property type="molecule type" value="mRNA"/>
</dbReference>
<dbReference type="CCDS" id="CCDS18691.1"/>
<dbReference type="RefSeq" id="NP_705769.2">
    <property type="nucleotide sequence ID" value="NM_153541.3"/>
</dbReference>
<dbReference type="SMR" id="Q8CII0"/>
<dbReference type="BioGRID" id="229641">
    <property type="interactions" value="1"/>
</dbReference>
<dbReference type="FunCoup" id="Q8CII0">
    <property type="interactions" value="1170"/>
</dbReference>
<dbReference type="STRING" id="10090.ENSMUSP00000058157"/>
<dbReference type="PhosphoSitePlus" id="Q8CII0"/>
<dbReference type="PaxDb" id="10090-ENSMUSP00000101661"/>
<dbReference type="DNASU" id="215627"/>
<dbReference type="GeneID" id="215627"/>
<dbReference type="KEGG" id="mmu:215627"/>
<dbReference type="AGR" id="MGI:2387181"/>
<dbReference type="CTD" id="728116"/>
<dbReference type="MGI" id="MGI:2387181">
    <property type="gene designation" value="Zbtb8b"/>
</dbReference>
<dbReference type="eggNOG" id="KOG1721">
    <property type="taxonomic scope" value="Eukaryota"/>
</dbReference>
<dbReference type="InParanoid" id="Q8CII0"/>
<dbReference type="OrthoDB" id="4845755at2759"/>
<dbReference type="PhylomeDB" id="Q8CII0"/>
<dbReference type="BioGRID-ORCS" id="215627">
    <property type="hits" value="1 hit in 76 CRISPR screens"/>
</dbReference>
<dbReference type="PRO" id="PR:Q8CII0"/>
<dbReference type="Proteomes" id="UP000000589">
    <property type="component" value="Unplaced"/>
</dbReference>
<dbReference type="RNAct" id="Q8CII0">
    <property type="molecule type" value="protein"/>
</dbReference>
<dbReference type="GO" id="GO:0005634">
    <property type="term" value="C:nucleus"/>
    <property type="evidence" value="ECO:0007669"/>
    <property type="project" value="UniProtKB-SubCell"/>
</dbReference>
<dbReference type="GO" id="GO:0003677">
    <property type="term" value="F:DNA binding"/>
    <property type="evidence" value="ECO:0007669"/>
    <property type="project" value="UniProtKB-KW"/>
</dbReference>
<dbReference type="GO" id="GO:0008270">
    <property type="term" value="F:zinc ion binding"/>
    <property type="evidence" value="ECO:0007669"/>
    <property type="project" value="UniProtKB-KW"/>
</dbReference>
<dbReference type="CDD" id="cd18330">
    <property type="entry name" value="BTB_POZ_ZBTB8B"/>
    <property type="match status" value="1"/>
</dbReference>
<dbReference type="FunFam" id="3.30.160.60:FF:000065">
    <property type="entry name" value="B-cell CLL/lymphoma 6, member B"/>
    <property type="match status" value="1"/>
</dbReference>
<dbReference type="FunFam" id="3.30.160.60:FF:000379">
    <property type="entry name" value="Zinc finger and BTB domain-containing protein 46"/>
    <property type="match status" value="1"/>
</dbReference>
<dbReference type="FunFam" id="3.30.710.10:FF:000112">
    <property type="entry name" value="Zinc finger and BTB domain-containing protein 8B"/>
    <property type="match status" value="1"/>
</dbReference>
<dbReference type="Gene3D" id="3.30.160.60">
    <property type="entry name" value="Classic Zinc Finger"/>
    <property type="match status" value="2"/>
</dbReference>
<dbReference type="Gene3D" id="3.30.710.10">
    <property type="entry name" value="Potassium Channel Kv1.1, Chain A"/>
    <property type="match status" value="1"/>
</dbReference>
<dbReference type="InterPro" id="IPR000210">
    <property type="entry name" value="BTB/POZ_dom"/>
</dbReference>
<dbReference type="InterPro" id="IPR011333">
    <property type="entry name" value="SKP1/BTB/POZ_sf"/>
</dbReference>
<dbReference type="InterPro" id="IPR036236">
    <property type="entry name" value="Znf_C2H2_sf"/>
</dbReference>
<dbReference type="InterPro" id="IPR013087">
    <property type="entry name" value="Znf_C2H2_type"/>
</dbReference>
<dbReference type="InterPro" id="IPR050457">
    <property type="entry name" value="ZnFinger_BTB_dom_contain"/>
</dbReference>
<dbReference type="PANTHER" id="PTHR46105">
    <property type="entry name" value="AGAP004733-PA"/>
    <property type="match status" value="1"/>
</dbReference>
<dbReference type="PANTHER" id="PTHR46105:SF25">
    <property type="entry name" value="ZGC:110075 PROTEIN"/>
    <property type="match status" value="1"/>
</dbReference>
<dbReference type="Pfam" id="PF00651">
    <property type="entry name" value="BTB"/>
    <property type="match status" value="1"/>
</dbReference>
<dbReference type="Pfam" id="PF13465">
    <property type="entry name" value="zf-H2C2_2"/>
    <property type="match status" value="1"/>
</dbReference>
<dbReference type="SMART" id="SM00225">
    <property type="entry name" value="BTB"/>
    <property type="match status" value="1"/>
</dbReference>
<dbReference type="SMART" id="SM00355">
    <property type="entry name" value="ZnF_C2H2"/>
    <property type="match status" value="2"/>
</dbReference>
<dbReference type="SUPFAM" id="SSF57667">
    <property type="entry name" value="beta-beta-alpha zinc fingers"/>
    <property type="match status" value="1"/>
</dbReference>
<dbReference type="SUPFAM" id="SSF54695">
    <property type="entry name" value="POZ domain"/>
    <property type="match status" value="1"/>
</dbReference>
<dbReference type="PROSITE" id="PS50097">
    <property type="entry name" value="BTB"/>
    <property type="match status" value="1"/>
</dbReference>
<dbReference type="PROSITE" id="PS00028">
    <property type="entry name" value="ZINC_FINGER_C2H2_1"/>
    <property type="match status" value="1"/>
</dbReference>
<dbReference type="PROSITE" id="PS50157">
    <property type="entry name" value="ZINC_FINGER_C2H2_2"/>
    <property type="match status" value="2"/>
</dbReference>
<accession>Q8CII0</accession>
<accession>Q3US18</accession>
<keyword id="KW-0238">DNA-binding</keyword>
<keyword id="KW-0479">Metal-binding</keyword>
<keyword id="KW-0539">Nucleus</keyword>
<keyword id="KW-1185">Reference proteome</keyword>
<keyword id="KW-0677">Repeat</keyword>
<keyword id="KW-0804">Transcription</keyword>
<keyword id="KW-0805">Transcription regulation</keyword>
<keyword id="KW-0862">Zinc</keyword>
<keyword id="KW-0863">Zinc-finger</keyword>
<reference key="1">
    <citation type="journal article" date="2005" name="Science">
        <title>The transcriptional landscape of the mammalian genome.</title>
        <authorList>
            <person name="Carninci P."/>
            <person name="Kasukawa T."/>
            <person name="Katayama S."/>
            <person name="Gough J."/>
            <person name="Frith M.C."/>
            <person name="Maeda N."/>
            <person name="Oyama R."/>
            <person name="Ravasi T."/>
            <person name="Lenhard B."/>
            <person name="Wells C."/>
            <person name="Kodzius R."/>
            <person name="Shimokawa K."/>
            <person name="Bajic V.B."/>
            <person name="Brenner S.E."/>
            <person name="Batalov S."/>
            <person name="Forrest A.R."/>
            <person name="Zavolan M."/>
            <person name="Davis M.J."/>
            <person name="Wilming L.G."/>
            <person name="Aidinis V."/>
            <person name="Allen J.E."/>
            <person name="Ambesi-Impiombato A."/>
            <person name="Apweiler R."/>
            <person name="Aturaliya R.N."/>
            <person name="Bailey T.L."/>
            <person name="Bansal M."/>
            <person name="Baxter L."/>
            <person name="Beisel K.W."/>
            <person name="Bersano T."/>
            <person name="Bono H."/>
            <person name="Chalk A.M."/>
            <person name="Chiu K.P."/>
            <person name="Choudhary V."/>
            <person name="Christoffels A."/>
            <person name="Clutterbuck D.R."/>
            <person name="Crowe M.L."/>
            <person name="Dalla E."/>
            <person name="Dalrymple B.P."/>
            <person name="de Bono B."/>
            <person name="Della Gatta G."/>
            <person name="di Bernardo D."/>
            <person name="Down T."/>
            <person name="Engstrom P."/>
            <person name="Fagiolini M."/>
            <person name="Faulkner G."/>
            <person name="Fletcher C.F."/>
            <person name="Fukushima T."/>
            <person name="Furuno M."/>
            <person name="Futaki S."/>
            <person name="Gariboldi M."/>
            <person name="Georgii-Hemming P."/>
            <person name="Gingeras T.R."/>
            <person name="Gojobori T."/>
            <person name="Green R.E."/>
            <person name="Gustincich S."/>
            <person name="Harbers M."/>
            <person name="Hayashi Y."/>
            <person name="Hensch T.K."/>
            <person name="Hirokawa N."/>
            <person name="Hill D."/>
            <person name="Huminiecki L."/>
            <person name="Iacono M."/>
            <person name="Ikeo K."/>
            <person name="Iwama A."/>
            <person name="Ishikawa T."/>
            <person name="Jakt M."/>
            <person name="Kanapin A."/>
            <person name="Katoh M."/>
            <person name="Kawasawa Y."/>
            <person name="Kelso J."/>
            <person name="Kitamura H."/>
            <person name="Kitano H."/>
            <person name="Kollias G."/>
            <person name="Krishnan S.P."/>
            <person name="Kruger A."/>
            <person name="Kummerfeld S.K."/>
            <person name="Kurochkin I.V."/>
            <person name="Lareau L.F."/>
            <person name="Lazarevic D."/>
            <person name="Lipovich L."/>
            <person name="Liu J."/>
            <person name="Liuni S."/>
            <person name="McWilliam S."/>
            <person name="Madan Babu M."/>
            <person name="Madera M."/>
            <person name="Marchionni L."/>
            <person name="Matsuda H."/>
            <person name="Matsuzawa S."/>
            <person name="Miki H."/>
            <person name="Mignone F."/>
            <person name="Miyake S."/>
            <person name="Morris K."/>
            <person name="Mottagui-Tabar S."/>
            <person name="Mulder N."/>
            <person name="Nakano N."/>
            <person name="Nakauchi H."/>
            <person name="Ng P."/>
            <person name="Nilsson R."/>
            <person name="Nishiguchi S."/>
            <person name="Nishikawa S."/>
            <person name="Nori F."/>
            <person name="Ohara O."/>
            <person name="Okazaki Y."/>
            <person name="Orlando V."/>
            <person name="Pang K.C."/>
            <person name="Pavan W.J."/>
            <person name="Pavesi G."/>
            <person name="Pesole G."/>
            <person name="Petrovsky N."/>
            <person name="Piazza S."/>
            <person name="Reed J."/>
            <person name="Reid J.F."/>
            <person name="Ring B.Z."/>
            <person name="Ringwald M."/>
            <person name="Rost B."/>
            <person name="Ruan Y."/>
            <person name="Salzberg S.L."/>
            <person name="Sandelin A."/>
            <person name="Schneider C."/>
            <person name="Schoenbach C."/>
            <person name="Sekiguchi K."/>
            <person name="Semple C.A."/>
            <person name="Seno S."/>
            <person name="Sessa L."/>
            <person name="Sheng Y."/>
            <person name="Shibata Y."/>
            <person name="Shimada H."/>
            <person name="Shimada K."/>
            <person name="Silva D."/>
            <person name="Sinclair B."/>
            <person name="Sperling S."/>
            <person name="Stupka E."/>
            <person name="Sugiura K."/>
            <person name="Sultana R."/>
            <person name="Takenaka Y."/>
            <person name="Taki K."/>
            <person name="Tammoja K."/>
            <person name="Tan S.L."/>
            <person name="Tang S."/>
            <person name="Taylor M.S."/>
            <person name="Tegner J."/>
            <person name="Teichmann S.A."/>
            <person name="Ueda H.R."/>
            <person name="van Nimwegen E."/>
            <person name="Verardo R."/>
            <person name="Wei C.L."/>
            <person name="Yagi K."/>
            <person name="Yamanishi H."/>
            <person name="Zabarovsky E."/>
            <person name="Zhu S."/>
            <person name="Zimmer A."/>
            <person name="Hide W."/>
            <person name="Bult C."/>
            <person name="Grimmond S.M."/>
            <person name="Teasdale R.D."/>
            <person name="Liu E.T."/>
            <person name="Brusic V."/>
            <person name="Quackenbush J."/>
            <person name="Wahlestedt C."/>
            <person name="Mattick J.S."/>
            <person name="Hume D.A."/>
            <person name="Kai C."/>
            <person name="Sasaki D."/>
            <person name="Tomaru Y."/>
            <person name="Fukuda S."/>
            <person name="Kanamori-Katayama M."/>
            <person name="Suzuki M."/>
            <person name="Aoki J."/>
            <person name="Arakawa T."/>
            <person name="Iida J."/>
            <person name="Imamura K."/>
            <person name="Itoh M."/>
            <person name="Kato T."/>
            <person name="Kawaji H."/>
            <person name="Kawagashira N."/>
            <person name="Kawashima T."/>
            <person name="Kojima M."/>
            <person name="Kondo S."/>
            <person name="Konno H."/>
            <person name="Nakano K."/>
            <person name="Ninomiya N."/>
            <person name="Nishio T."/>
            <person name="Okada M."/>
            <person name="Plessy C."/>
            <person name="Shibata K."/>
            <person name="Shiraki T."/>
            <person name="Suzuki S."/>
            <person name="Tagami M."/>
            <person name="Waki K."/>
            <person name="Watahiki A."/>
            <person name="Okamura-Oho Y."/>
            <person name="Suzuki H."/>
            <person name="Kawai J."/>
            <person name="Hayashizaki Y."/>
        </authorList>
    </citation>
    <scope>NUCLEOTIDE SEQUENCE [LARGE SCALE MRNA]</scope>
    <source>
        <strain>C57BL/6J</strain>
        <tissue>Cerebellum</tissue>
        <tissue>Head</tissue>
    </source>
</reference>
<reference key="2">
    <citation type="journal article" date="2004" name="Genome Res.">
        <title>The status, quality, and expansion of the NIH full-length cDNA project: the Mammalian Gene Collection (MGC).</title>
        <authorList>
            <consortium name="The MGC Project Team"/>
        </authorList>
    </citation>
    <scope>NUCLEOTIDE SEQUENCE [LARGE SCALE MRNA]</scope>
    <source>
        <strain>FVB/N</strain>
    </source>
</reference>